<evidence type="ECO:0000255" key="1">
    <source>
        <dbReference type="HAMAP-Rule" id="MF_00373"/>
    </source>
</evidence>
<evidence type="ECO:0000256" key="2">
    <source>
        <dbReference type="SAM" id="MobiDB-lite"/>
    </source>
</evidence>
<evidence type="ECO:0000305" key="3"/>
<reference key="1">
    <citation type="submission" date="2008-10" db="EMBL/GenBank/DDBJ databases">
        <title>Genome sequence of Bacillus cereus G9842.</title>
        <authorList>
            <person name="Dodson R.J."/>
            <person name="Durkin A.S."/>
            <person name="Rosovitz M.J."/>
            <person name="Rasko D.A."/>
            <person name="Hoffmaster A."/>
            <person name="Ravel J."/>
            <person name="Sutton G."/>
        </authorList>
    </citation>
    <scope>NUCLEOTIDE SEQUENCE [LARGE SCALE GENOMIC DNA]</scope>
    <source>
        <strain>G9842</strain>
    </source>
</reference>
<sequence length="62" mass="6923">MARVCAITGRKARSGNSRSHAMNATKRKWGANLQKVRVRIDGKVQRVYVSARALKSGKIERV</sequence>
<keyword id="KW-0687">Ribonucleoprotein</keyword>
<keyword id="KW-0689">Ribosomal protein</keyword>
<proteinExistence type="inferred from homology"/>
<name>RL28_BACC2</name>
<protein>
    <recommendedName>
        <fullName evidence="1">Large ribosomal subunit protein bL28</fullName>
    </recommendedName>
    <alternativeName>
        <fullName evidence="3">50S ribosomal protein L28</fullName>
    </alternativeName>
</protein>
<feature type="chain" id="PRO_1000121582" description="Large ribosomal subunit protein bL28">
    <location>
        <begin position="1"/>
        <end position="62"/>
    </location>
</feature>
<feature type="region of interest" description="Disordered" evidence="2">
    <location>
        <begin position="1"/>
        <end position="28"/>
    </location>
</feature>
<dbReference type="EMBL" id="CP001186">
    <property type="protein sequence ID" value="ACK94547.1"/>
    <property type="molecule type" value="Genomic_DNA"/>
</dbReference>
<dbReference type="RefSeq" id="WP_000124776.1">
    <property type="nucleotide sequence ID" value="NC_011772.1"/>
</dbReference>
<dbReference type="SMR" id="B7IUL7"/>
<dbReference type="GeneID" id="93007254"/>
<dbReference type="KEGG" id="bcg:BCG9842_B1286"/>
<dbReference type="HOGENOM" id="CLU_064548_7_1_9"/>
<dbReference type="Proteomes" id="UP000006744">
    <property type="component" value="Chromosome"/>
</dbReference>
<dbReference type="GO" id="GO:1990904">
    <property type="term" value="C:ribonucleoprotein complex"/>
    <property type="evidence" value="ECO:0007669"/>
    <property type="project" value="UniProtKB-KW"/>
</dbReference>
<dbReference type="GO" id="GO:0005840">
    <property type="term" value="C:ribosome"/>
    <property type="evidence" value="ECO:0007669"/>
    <property type="project" value="UniProtKB-KW"/>
</dbReference>
<dbReference type="GO" id="GO:0003735">
    <property type="term" value="F:structural constituent of ribosome"/>
    <property type="evidence" value="ECO:0007669"/>
    <property type="project" value="InterPro"/>
</dbReference>
<dbReference type="GO" id="GO:0006412">
    <property type="term" value="P:translation"/>
    <property type="evidence" value="ECO:0007669"/>
    <property type="project" value="UniProtKB-UniRule"/>
</dbReference>
<dbReference type="Gene3D" id="2.30.170.40">
    <property type="entry name" value="Ribosomal protein L28/L24"/>
    <property type="match status" value="1"/>
</dbReference>
<dbReference type="HAMAP" id="MF_00373">
    <property type="entry name" value="Ribosomal_bL28"/>
    <property type="match status" value="1"/>
</dbReference>
<dbReference type="InterPro" id="IPR050096">
    <property type="entry name" value="Bacterial_rp_bL28"/>
</dbReference>
<dbReference type="InterPro" id="IPR026569">
    <property type="entry name" value="Ribosomal_bL28"/>
</dbReference>
<dbReference type="InterPro" id="IPR034704">
    <property type="entry name" value="Ribosomal_bL28/bL31-like_sf"/>
</dbReference>
<dbReference type="InterPro" id="IPR001383">
    <property type="entry name" value="Ribosomal_bL28_bact-type"/>
</dbReference>
<dbReference type="InterPro" id="IPR037147">
    <property type="entry name" value="Ribosomal_bL28_sf"/>
</dbReference>
<dbReference type="NCBIfam" id="TIGR00009">
    <property type="entry name" value="L28"/>
    <property type="match status" value="1"/>
</dbReference>
<dbReference type="PANTHER" id="PTHR39080">
    <property type="entry name" value="50S RIBOSOMAL PROTEIN L28"/>
    <property type="match status" value="1"/>
</dbReference>
<dbReference type="PANTHER" id="PTHR39080:SF1">
    <property type="entry name" value="LARGE RIBOSOMAL SUBUNIT PROTEIN BL28A"/>
    <property type="match status" value="1"/>
</dbReference>
<dbReference type="Pfam" id="PF00830">
    <property type="entry name" value="Ribosomal_L28"/>
    <property type="match status" value="1"/>
</dbReference>
<dbReference type="SUPFAM" id="SSF143800">
    <property type="entry name" value="L28p-like"/>
    <property type="match status" value="1"/>
</dbReference>
<accession>B7IUL7</accession>
<organism>
    <name type="scientific">Bacillus cereus (strain G9842)</name>
    <dbReference type="NCBI Taxonomy" id="405531"/>
    <lineage>
        <taxon>Bacteria</taxon>
        <taxon>Bacillati</taxon>
        <taxon>Bacillota</taxon>
        <taxon>Bacilli</taxon>
        <taxon>Bacillales</taxon>
        <taxon>Bacillaceae</taxon>
        <taxon>Bacillus</taxon>
        <taxon>Bacillus cereus group</taxon>
    </lineage>
</organism>
<gene>
    <name evidence="1" type="primary">rpmB</name>
    <name type="ordered locus">BCG9842_B1286</name>
</gene>
<comment type="similarity">
    <text evidence="1">Belongs to the bacterial ribosomal protein bL28 family.</text>
</comment>